<sequence length="698" mass="79299">MTSLQQQQQQQRVKYGPPHHIKRRPYHPILESLEFQTNQHLIQEYSLDIVNTLSQLESLTLVNPAMIDLQPEIQWFMRPFLLDFLIELHSSFKLQPTTLFLCLNIIDRYCAKRIVFKRHYQLVGCTALWIASKYEDKKSRVPTLKELTIMCRNAYDEEMFVQMEMHILSTLDWSIGHPTLEDCLQLAIDSNNLSNNTTNDIENKSVRPNRKSSISSAVTAVARFLCELSLYDKYFLSVPPSLIAITANLLSCSMLQIPHASITLKNLIEQEIINPQQKKQKKAFSSNSSRTTTASYTHQNQSDVRHSSFDEDIDLDSGDEGDDDEDYIDEFYETNNYDDTNATTFDESINKSTTINDENQPPQIHTPFLSGLDEDSILSIKKICLMLIIQLSKVTEVLSKKYENLGVIQVINNFHSNYKFIIQSIYENQELLLNTINDSTNNNEIDYKLIQSSEILLQFPKFDEYLTEDEDENVSTDDEANSQPQGYDGSGSDGNNQLFTPKSPNAFSSNSSLTLNNHPQSMVPVTPPSATSQYSLFSNKNNRTHESTSGLNSTCNTPTHISISSFAPPQPPPGSILKPKLTSINSTNSLKIKKLTSNSNSSNINIHHGHHNTKQEKRYSHISIGSNSSSKYDGFSPIKSISTNGSLITNNGSFTNIVNNTNSSSPLMNQQQQYYHQQQHQQQVTQSSLYQHHHQYHQ</sequence>
<accession>C4YR54</accession>
<accession>P24866</accession>
<comment type="function">
    <text>Essential for the control of the cell cycle at the G1/S (start) transition. Interacts with the CDC2 protein kinase to form MPF.</text>
</comment>
<comment type="similarity">
    <text evidence="2">Belongs to the cyclin family.</text>
</comment>
<evidence type="ECO:0000256" key="1">
    <source>
        <dbReference type="SAM" id="MobiDB-lite"/>
    </source>
</evidence>
<evidence type="ECO:0000305" key="2"/>
<name>CG11_CANAW</name>
<reference key="1">
    <citation type="journal article" date="2009" name="Nature">
        <title>Evolution of pathogenicity and sexual reproduction in eight Candida genomes.</title>
        <authorList>
            <person name="Butler G."/>
            <person name="Rasmussen M.D."/>
            <person name="Lin M.F."/>
            <person name="Santos M.A.S."/>
            <person name="Sakthikumar S."/>
            <person name="Munro C.A."/>
            <person name="Rheinbay E."/>
            <person name="Grabherr M."/>
            <person name="Forche A."/>
            <person name="Reedy J.L."/>
            <person name="Agrafioti I."/>
            <person name="Arnaud M.B."/>
            <person name="Bates S."/>
            <person name="Brown A.J.P."/>
            <person name="Brunke S."/>
            <person name="Costanzo M.C."/>
            <person name="Fitzpatrick D.A."/>
            <person name="de Groot P.W.J."/>
            <person name="Harris D."/>
            <person name="Hoyer L.L."/>
            <person name="Hube B."/>
            <person name="Klis F.M."/>
            <person name="Kodira C."/>
            <person name="Lennard N."/>
            <person name="Logue M.E."/>
            <person name="Martin R."/>
            <person name="Neiman A.M."/>
            <person name="Nikolaou E."/>
            <person name="Quail M.A."/>
            <person name="Quinn J."/>
            <person name="Santos M.C."/>
            <person name="Schmitzberger F.F."/>
            <person name="Sherlock G."/>
            <person name="Shah P."/>
            <person name="Silverstein K.A.T."/>
            <person name="Skrzypek M.S."/>
            <person name="Soll D."/>
            <person name="Staggs R."/>
            <person name="Stansfield I."/>
            <person name="Stumpf M.P.H."/>
            <person name="Sudbery P.E."/>
            <person name="Srikantha T."/>
            <person name="Zeng Q."/>
            <person name="Berman J."/>
            <person name="Berriman M."/>
            <person name="Heitman J."/>
            <person name="Gow N.A.R."/>
            <person name="Lorenz M.C."/>
            <person name="Birren B.W."/>
            <person name="Kellis M."/>
            <person name="Cuomo C.A."/>
        </authorList>
    </citation>
    <scope>NUCLEOTIDE SEQUENCE [LARGE SCALE GENOMIC DNA]</scope>
    <source>
        <strain>WO-1</strain>
    </source>
</reference>
<reference key="2">
    <citation type="journal article" date="1992" name="Proc. Natl. Acad. Sci. U.S.A.">
        <title>Dominant negative selection of heterologous genes: isolation of Candida albicans genes that interfere with Saccharomyces cerevisiae mating factor-induced cell cycle arrest.</title>
        <authorList>
            <person name="Whiteway M."/>
            <person name="Dignard D."/>
            <person name="Thomas D.Y."/>
        </authorList>
    </citation>
    <scope>NUCLEOTIDE SEQUENCE [GENOMIC DNA] OF 1-646</scope>
    <source>
        <strain>WO-1</strain>
    </source>
</reference>
<organism>
    <name type="scientific">Candida albicans (strain WO-1)</name>
    <name type="common">Yeast</name>
    <dbReference type="NCBI Taxonomy" id="294748"/>
    <lineage>
        <taxon>Eukaryota</taxon>
        <taxon>Fungi</taxon>
        <taxon>Dikarya</taxon>
        <taxon>Ascomycota</taxon>
        <taxon>Saccharomycotina</taxon>
        <taxon>Pichiomycetes</taxon>
        <taxon>Debaryomycetaceae</taxon>
        <taxon>Candida/Lodderomyces clade</taxon>
        <taxon>Candida</taxon>
    </lineage>
</organism>
<gene>
    <name type="primary">CCN1</name>
    <name type="synonym">CLN1</name>
    <name type="ORF">CAWG_04553</name>
</gene>
<keyword id="KW-0131">Cell cycle</keyword>
<keyword id="KW-0132">Cell division</keyword>
<keyword id="KW-0195">Cyclin</keyword>
<dbReference type="EMBL" id="CM000311">
    <property type="protein sequence ID" value="EEQ46207.1"/>
    <property type="molecule type" value="Genomic_DNA"/>
</dbReference>
<dbReference type="EMBL" id="M76587">
    <property type="protein sequence ID" value="AAA34330.2"/>
    <property type="molecule type" value="Genomic_DNA"/>
</dbReference>
<dbReference type="PIR" id="S49206">
    <property type="entry name" value="S49206"/>
</dbReference>
<dbReference type="SMR" id="C4YR54"/>
<dbReference type="PaxDb" id="5476-C4YR54"/>
<dbReference type="VEuPathDB" id="FungiDB:CAWG_04553"/>
<dbReference type="HOGENOM" id="CLU_029626_0_0_1"/>
<dbReference type="OMA" id="DEEMFIQ"/>
<dbReference type="OrthoDB" id="18952at766764"/>
<dbReference type="Proteomes" id="UP000001429">
    <property type="component" value="Chromosome 5"/>
</dbReference>
<dbReference type="GO" id="GO:0016538">
    <property type="term" value="F:cyclin-dependent protein serine/threonine kinase regulator activity"/>
    <property type="evidence" value="ECO:0007669"/>
    <property type="project" value="UniProtKB-ARBA"/>
</dbReference>
<dbReference type="GO" id="GO:0051301">
    <property type="term" value="P:cell division"/>
    <property type="evidence" value="ECO:0007669"/>
    <property type="project" value="UniProtKB-KW"/>
</dbReference>
<dbReference type="GO" id="GO:0030447">
    <property type="term" value="P:filamentous growth"/>
    <property type="evidence" value="ECO:0007669"/>
    <property type="project" value="UniProtKB-ARBA"/>
</dbReference>
<dbReference type="GO" id="GO:2000045">
    <property type="term" value="P:regulation of G1/S transition of mitotic cell cycle"/>
    <property type="evidence" value="ECO:0007669"/>
    <property type="project" value="InterPro"/>
</dbReference>
<dbReference type="CDD" id="cd20537">
    <property type="entry name" value="CYCLIN_CCNO-like_rpt2"/>
    <property type="match status" value="1"/>
</dbReference>
<dbReference type="CDD" id="cd20559">
    <property type="entry name" value="CYCLIN_ScCLN_like"/>
    <property type="match status" value="1"/>
</dbReference>
<dbReference type="FunFam" id="1.10.472.10:FF:000010">
    <property type="entry name" value="G1/S-specific cyclin Cln1"/>
    <property type="match status" value="1"/>
</dbReference>
<dbReference type="Gene3D" id="1.10.472.10">
    <property type="entry name" value="Cyclin-like"/>
    <property type="match status" value="2"/>
</dbReference>
<dbReference type="InterPro" id="IPR039361">
    <property type="entry name" value="Cyclin"/>
</dbReference>
<dbReference type="InterPro" id="IPR013763">
    <property type="entry name" value="Cyclin-like_dom"/>
</dbReference>
<dbReference type="InterPro" id="IPR036915">
    <property type="entry name" value="Cyclin-like_sf"/>
</dbReference>
<dbReference type="InterPro" id="IPR004367">
    <property type="entry name" value="Cyclin_C-dom"/>
</dbReference>
<dbReference type="InterPro" id="IPR014399">
    <property type="entry name" value="Cyclin_CLN"/>
</dbReference>
<dbReference type="InterPro" id="IPR006671">
    <property type="entry name" value="Cyclin_N"/>
</dbReference>
<dbReference type="InterPro" id="IPR048258">
    <property type="entry name" value="Cyclins_cyclin-box"/>
</dbReference>
<dbReference type="PANTHER" id="PTHR10177">
    <property type="entry name" value="CYCLINS"/>
    <property type="match status" value="1"/>
</dbReference>
<dbReference type="Pfam" id="PF02984">
    <property type="entry name" value="Cyclin_C"/>
    <property type="match status" value="1"/>
</dbReference>
<dbReference type="Pfam" id="PF00134">
    <property type="entry name" value="Cyclin_N"/>
    <property type="match status" value="1"/>
</dbReference>
<dbReference type="PIRSF" id="PIRSF001770">
    <property type="entry name" value="Cyclin_CLN"/>
    <property type="match status" value="1"/>
</dbReference>
<dbReference type="SMART" id="SM00385">
    <property type="entry name" value="CYCLIN"/>
    <property type="match status" value="1"/>
</dbReference>
<dbReference type="SMART" id="SM01332">
    <property type="entry name" value="Cyclin_C"/>
    <property type="match status" value="1"/>
</dbReference>
<dbReference type="SUPFAM" id="SSF47954">
    <property type="entry name" value="Cyclin-like"/>
    <property type="match status" value="2"/>
</dbReference>
<dbReference type="PROSITE" id="PS00292">
    <property type="entry name" value="CYCLINS"/>
    <property type="match status" value="1"/>
</dbReference>
<proteinExistence type="inferred from homology"/>
<feature type="chain" id="PRO_0000413035" description="G1/S-specific cyclin CCN1">
    <location>
        <begin position="1"/>
        <end position="698"/>
    </location>
</feature>
<feature type="region of interest" description="Disordered" evidence="1">
    <location>
        <begin position="1"/>
        <end position="21"/>
    </location>
</feature>
<feature type="region of interest" description="Disordered" evidence="1">
    <location>
        <begin position="277"/>
        <end position="326"/>
    </location>
</feature>
<feature type="region of interest" description="Disordered" evidence="1">
    <location>
        <begin position="469"/>
        <end position="577"/>
    </location>
</feature>
<feature type="region of interest" description="Disordered" evidence="1">
    <location>
        <begin position="599"/>
        <end position="619"/>
    </location>
</feature>
<feature type="region of interest" description="Disordered" evidence="1">
    <location>
        <begin position="659"/>
        <end position="698"/>
    </location>
</feature>
<feature type="compositionally biased region" description="Low complexity" evidence="1">
    <location>
        <begin position="1"/>
        <end position="11"/>
    </location>
</feature>
<feature type="compositionally biased region" description="Polar residues" evidence="1">
    <location>
        <begin position="277"/>
        <end position="302"/>
    </location>
</feature>
<feature type="compositionally biased region" description="Acidic residues" evidence="1">
    <location>
        <begin position="310"/>
        <end position="326"/>
    </location>
</feature>
<feature type="compositionally biased region" description="Acidic residues" evidence="1">
    <location>
        <begin position="469"/>
        <end position="480"/>
    </location>
</feature>
<feature type="compositionally biased region" description="Polar residues" evidence="1">
    <location>
        <begin position="493"/>
        <end position="520"/>
    </location>
</feature>
<feature type="compositionally biased region" description="Polar residues" evidence="1">
    <location>
        <begin position="528"/>
        <end position="567"/>
    </location>
</feature>
<feature type="compositionally biased region" description="Polar residues" evidence="1">
    <location>
        <begin position="659"/>
        <end position="669"/>
    </location>
</feature>
<feature type="compositionally biased region" description="Low complexity" evidence="1">
    <location>
        <begin position="670"/>
        <end position="690"/>
    </location>
</feature>
<protein>
    <recommendedName>
        <fullName>G1/S-specific cyclin CCN1</fullName>
    </recommendedName>
</protein>